<evidence type="ECO:0000255" key="1">
    <source>
        <dbReference type="PROSITE-ProRule" id="PRU00858"/>
    </source>
</evidence>
<evidence type="ECO:0000256" key="2">
    <source>
        <dbReference type="SAM" id="MobiDB-lite"/>
    </source>
</evidence>
<evidence type="ECO:0000269" key="3">
    <source>
    </source>
</evidence>
<evidence type="ECO:0000305" key="4"/>
<sequence>MNPSDLPGQIPLSRSDMNVQDQLDPVQRFDTHFMLPQEENFLNRPSITSESAHPRGSDLEQETELKRLALEHEHYSLESLAEKLRMDHVSANSEKFRQVFGICWLKRACEEQQDAAVQRNQIYAHYVEICNSLHIKPLNSASFGKLVRLLFPSIKTRRLGMRGHSKYHYCGIKLRGQDSFRRLRTFSDSSLSPVSCSSFPKPIPNHFENDVSSIQNTNQRVESSPASVNAAAIVRKSAVTPSSDPYNSPPPSIPLLGSQTNLQLAPSFAAPQAHPLPSHLSQSNVPPQLSHSSVPSPAPPRSVSQPTYFSQPMPQFSSSFVPGTSSIVPTLHPASAQEDFNLQHSLFFKLKLKFLPPHKLPWIPSLDVSSFSLPPIDYYLNGPYDNVEAKSALMNIYSSHCITLIESVRYMHLKQFLSEISNFPNSLSPSLLALLSSPYFTKWIERSDTVMYREILKLLFPMTLQVVPPPVLVLLRHLAENLVNHISSIYASHSSCLLQVKSETAAIFSNLLSRLLRVNDTAHAAARFLANPADRHLICNDWERFVSTRFIVHRELMCNDKEAVAALDEWYSILSTCSNPSELLDPLKDKHEASDTSMNRVELRQIDGVLDRMADFFLELPSRFPSCSPRMFLLCLGALQTSVLREITVSGGEAFGALWVIRCWVDEYMTWVAEIGGYLDDSYDELEQHHANFHNKAGISQSNIPPHLQEHRQSQQHFQQDIEALQSQQQQQATKNSLMEAAYQNAQKQKEDDYISIVFDTNGACS</sequence>
<feature type="chain" id="PRO_0000215293" description="Protein sak1">
    <location>
        <begin position="1"/>
        <end position="766"/>
    </location>
</feature>
<feature type="DNA-binding region" description="RFX-type winged-helix" evidence="1">
    <location>
        <begin position="101"/>
        <end position="176"/>
    </location>
</feature>
<feature type="region of interest" description="Disordered" evidence="2">
    <location>
        <begin position="271"/>
        <end position="308"/>
    </location>
</feature>
<feature type="region of interest" description="Disordered" evidence="2">
    <location>
        <begin position="708"/>
        <end position="731"/>
    </location>
</feature>
<feature type="compositionally biased region" description="Polar residues" evidence="2">
    <location>
        <begin position="279"/>
        <end position="289"/>
    </location>
</feature>
<feature type="compositionally biased region" description="Low complexity" evidence="2">
    <location>
        <begin position="290"/>
        <end position="308"/>
    </location>
</feature>
<feature type="compositionally biased region" description="Low complexity" evidence="2">
    <location>
        <begin position="715"/>
        <end position="731"/>
    </location>
</feature>
<feature type="modified residue" description="Phosphoserine" evidence="3">
    <location>
        <position position="223"/>
    </location>
</feature>
<feature type="modified residue" description="Phosphoserine" evidence="3">
    <location>
        <position position="224"/>
    </location>
</feature>
<feature type="modified residue" description="Phosphoserine" evidence="3">
    <location>
        <position position="227"/>
    </location>
</feature>
<feature type="sequence conflict" description="In Ref. 1; AAA67937." evidence="4" ref="1">
    <original>QQQQQATKNSLMEAAYQNAQKQKEDDYISIVFDTNGACS</original>
    <variation>TTTTTSH</variation>
    <location>
        <begin position="728"/>
        <end position="766"/>
    </location>
</feature>
<proteinExistence type="evidence at protein level"/>
<name>SAK1_SCHPO</name>
<keyword id="KW-0238">DNA-binding</keyword>
<keyword id="KW-0539">Nucleus</keyword>
<keyword id="KW-0597">Phosphoprotein</keyword>
<keyword id="KW-1185">Reference proteome</keyword>
<protein>
    <recommendedName>
        <fullName>Protein sak1</fullName>
    </recommendedName>
</protein>
<accession>P48383</accession>
<accession>O42876</accession>
<organism>
    <name type="scientific">Schizosaccharomyces pombe (strain 972 / ATCC 24843)</name>
    <name type="common">Fission yeast</name>
    <dbReference type="NCBI Taxonomy" id="284812"/>
    <lineage>
        <taxon>Eukaryota</taxon>
        <taxon>Fungi</taxon>
        <taxon>Dikarya</taxon>
        <taxon>Ascomycota</taxon>
        <taxon>Taphrinomycotina</taxon>
        <taxon>Schizosaccharomycetes</taxon>
        <taxon>Schizosaccharomycetales</taxon>
        <taxon>Schizosaccharomycetaceae</taxon>
        <taxon>Schizosaccharomyces</taxon>
    </lineage>
</organism>
<dbReference type="EMBL" id="U19978">
    <property type="protein sequence ID" value="AAA67937.1"/>
    <property type="molecule type" value="Genomic_DNA"/>
</dbReference>
<dbReference type="EMBL" id="CU329670">
    <property type="protein sequence ID" value="CAA15923.1"/>
    <property type="molecule type" value="Genomic_DNA"/>
</dbReference>
<dbReference type="PIR" id="T11650">
    <property type="entry name" value="T11650"/>
</dbReference>
<dbReference type="PIR" id="T52535">
    <property type="entry name" value="T52535"/>
</dbReference>
<dbReference type="RefSeq" id="NP_594086.1">
    <property type="nucleotide sequence ID" value="NM_001019499.2"/>
</dbReference>
<dbReference type="SMR" id="P48383"/>
<dbReference type="BioGRID" id="279843">
    <property type="interactions" value="9"/>
</dbReference>
<dbReference type="FunCoup" id="P48383">
    <property type="interactions" value="436"/>
</dbReference>
<dbReference type="STRING" id="284812.P48383"/>
<dbReference type="iPTMnet" id="P48383"/>
<dbReference type="SwissPalm" id="P48383"/>
<dbReference type="PaxDb" id="4896-SPAC3G9.14.1"/>
<dbReference type="EnsemblFungi" id="SPAC3G9.14.1">
    <property type="protein sequence ID" value="SPAC3G9.14.1:pep"/>
    <property type="gene ID" value="SPAC3G9.14"/>
</dbReference>
<dbReference type="GeneID" id="2543421"/>
<dbReference type="KEGG" id="spo:2543421"/>
<dbReference type="PomBase" id="SPAC3G9.14">
    <property type="gene designation" value="sak1"/>
</dbReference>
<dbReference type="VEuPathDB" id="FungiDB:SPAC3G9.14"/>
<dbReference type="eggNOG" id="KOG3712">
    <property type="taxonomic scope" value="Eukaryota"/>
</dbReference>
<dbReference type="HOGENOM" id="CLU_011526_1_1_1"/>
<dbReference type="InParanoid" id="P48383"/>
<dbReference type="OMA" id="MIWLREN"/>
<dbReference type="PhylomeDB" id="P48383"/>
<dbReference type="PRO" id="PR:P48383"/>
<dbReference type="Proteomes" id="UP000002485">
    <property type="component" value="Chromosome I"/>
</dbReference>
<dbReference type="GO" id="GO:0000785">
    <property type="term" value="C:chromatin"/>
    <property type="evidence" value="ECO:0000314"/>
    <property type="project" value="PomBase"/>
</dbReference>
<dbReference type="GO" id="GO:0005737">
    <property type="term" value="C:cytoplasm"/>
    <property type="evidence" value="ECO:0000266"/>
    <property type="project" value="PomBase"/>
</dbReference>
<dbReference type="GO" id="GO:0005634">
    <property type="term" value="C:nucleus"/>
    <property type="evidence" value="ECO:0007005"/>
    <property type="project" value="PomBase"/>
</dbReference>
<dbReference type="GO" id="GO:0001228">
    <property type="term" value="F:DNA-binding transcription activator activity, RNA polymerase II-specific"/>
    <property type="evidence" value="ECO:0000315"/>
    <property type="project" value="PomBase"/>
</dbReference>
<dbReference type="GO" id="GO:0000981">
    <property type="term" value="F:DNA-binding transcription factor activity, RNA polymerase II-specific"/>
    <property type="evidence" value="ECO:0000318"/>
    <property type="project" value="GO_Central"/>
</dbReference>
<dbReference type="GO" id="GO:0000978">
    <property type="term" value="F:RNA polymerase II cis-regulatory region sequence-specific DNA binding"/>
    <property type="evidence" value="ECO:0000318"/>
    <property type="project" value="GO_Central"/>
</dbReference>
<dbReference type="GO" id="GO:0045944">
    <property type="term" value="P:positive regulation of transcription by RNA polymerase II"/>
    <property type="evidence" value="ECO:0000315"/>
    <property type="project" value="PomBase"/>
</dbReference>
<dbReference type="GO" id="GO:0006357">
    <property type="term" value="P:regulation of transcription by RNA polymerase II"/>
    <property type="evidence" value="ECO:0000318"/>
    <property type="project" value="GO_Central"/>
</dbReference>
<dbReference type="FunFam" id="1.10.10.10:FF:000422">
    <property type="entry name" value="DNA-binding protein RFX7"/>
    <property type="match status" value="1"/>
</dbReference>
<dbReference type="Gene3D" id="1.10.10.10">
    <property type="entry name" value="Winged helix-like DNA-binding domain superfamily/Winged helix DNA-binding domain"/>
    <property type="match status" value="1"/>
</dbReference>
<dbReference type="InterPro" id="IPR003150">
    <property type="entry name" value="DNA-bd_RFX"/>
</dbReference>
<dbReference type="InterPro" id="IPR039779">
    <property type="entry name" value="RFX-like"/>
</dbReference>
<dbReference type="InterPro" id="IPR036388">
    <property type="entry name" value="WH-like_DNA-bd_sf"/>
</dbReference>
<dbReference type="InterPro" id="IPR036390">
    <property type="entry name" value="WH_DNA-bd_sf"/>
</dbReference>
<dbReference type="PANTHER" id="PTHR12619">
    <property type="entry name" value="RFX TRANSCRIPTION FACTOR FAMILY"/>
    <property type="match status" value="1"/>
</dbReference>
<dbReference type="PANTHER" id="PTHR12619:SF5">
    <property type="entry name" value="TRANSCRIPTION FACTOR RFX4"/>
    <property type="match status" value="1"/>
</dbReference>
<dbReference type="Pfam" id="PF25340">
    <property type="entry name" value="BCD_RFX"/>
    <property type="match status" value="1"/>
</dbReference>
<dbReference type="Pfam" id="PF02257">
    <property type="entry name" value="RFX_DNA_binding"/>
    <property type="match status" value="1"/>
</dbReference>
<dbReference type="SUPFAM" id="SSF46785">
    <property type="entry name" value="Winged helix' DNA-binding domain"/>
    <property type="match status" value="1"/>
</dbReference>
<dbReference type="PROSITE" id="PS51526">
    <property type="entry name" value="RFX_DBD"/>
    <property type="match status" value="1"/>
</dbReference>
<gene>
    <name type="primary">sak1</name>
    <name type="ORF">SPAC3G9.14</name>
</gene>
<comment type="function">
    <text>Positively regulates cyclic AMP-dependent protein kinase-mediated exit from the mitotic cell cycle.</text>
</comment>
<comment type="subcellular location">
    <subcellularLocation>
        <location evidence="4">Nucleus</location>
    </subcellularLocation>
</comment>
<comment type="similarity">
    <text evidence="1">Belongs to the RFX family.</text>
</comment>
<reference key="1">
    <citation type="journal article" date="1995" name="Mol. Cell. Biol.">
        <title>The sak1+ gene of Schizosaccharomyces pombe encodes an RFX family DNA-binding protein that positively regulates cyclic AMP-dependent protein kinase-mediated exit from the mitotic cell cycle.</title>
        <authorList>
            <person name="Wu S.Y."/>
            <person name="McLeod M."/>
        </authorList>
    </citation>
    <scope>NUCLEOTIDE SEQUENCE [GENOMIC DNA]</scope>
</reference>
<reference key="2">
    <citation type="journal article" date="2002" name="Nature">
        <title>The genome sequence of Schizosaccharomyces pombe.</title>
        <authorList>
            <person name="Wood V."/>
            <person name="Gwilliam R."/>
            <person name="Rajandream M.A."/>
            <person name="Lyne M.H."/>
            <person name="Lyne R."/>
            <person name="Stewart A."/>
            <person name="Sgouros J.G."/>
            <person name="Peat N."/>
            <person name="Hayles J."/>
            <person name="Baker S.G."/>
            <person name="Basham D."/>
            <person name="Bowman S."/>
            <person name="Brooks K."/>
            <person name="Brown D."/>
            <person name="Brown S."/>
            <person name="Chillingworth T."/>
            <person name="Churcher C.M."/>
            <person name="Collins M."/>
            <person name="Connor R."/>
            <person name="Cronin A."/>
            <person name="Davis P."/>
            <person name="Feltwell T."/>
            <person name="Fraser A."/>
            <person name="Gentles S."/>
            <person name="Goble A."/>
            <person name="Hamlin N."/>
            <person name="Harris D.E."/>
            <person name="Hidalgo J."/>
            <person name="Hodgson G."/>
            <person name="Holroyd S."/>
            <person name="Hornsby T."/>
            <person name="Howarth S."/>
            <person name="Huckle E.J."/>
            <person name="Hunt S."/>
            <person name="Jagels K."/>
            <person name="James K.D."/>
            <person name="Jones L."/>
            <person name="Jones M."/>
            <person name="Leather S."/>
            <person name="McDonald S."/>
            <person name="McLean J."/>
            <person name="Mooney P."/>
            <person name="Moule S."/>
            <person name="Mungall K.L."/>
            <person name="Murphy L.D."/>
            <person name="Niblett D."/>
            <person name="Odell C."/>
            <person name="Oliver K."/>
            <person name="O'Neil S."/>
            <person name="Pearson D."/>
            <person name="Quail M.A."/>
            <person name="Rabbinowitsch E."/>
            <person name="Rutherford K.M."/>
            <person name="Rutter S."/>
            <person name="Saunders D."/>
            <person name="Seeger K."/>
            <person name="Sharp S."/>
            <person name="Skelton J."/>
            <person name="Simmonds M.N."/>
            <person name="Squares R."/>
            <person name="Squares S."/>
            <person name="Stevens K."/>
            <person name="Taylor K."/>
            <person name="Taylor R.G."/>
            <person name="Tivey A."/>
            <person name="Walsh S.V."/>
            <person name="Warren T."/>
            <person name="Whitehead S."/>
            <person name="Woodward J.R."/>
            <person name="Volckaert G."/>
            <person name="Aert R."/>
            <person name="Robben J."/>
            <person name="Grymonprez B."/>
            <person name="Weltjens I."/>
            <person name="Vanstreels E."/>
            <person name="Rieger M."/>
            <person name="Schaefer M."/>
            <person name="Mueller-Auer S."/>
            <person name="Gabel C."/>
            <person name="Fuchs M."/>
            <person name="Duesterhoeft A."/>
            <person name="Fritzc C."/>
            <person name="Holzer E."/>
            <person name="Moestl D."/>
            <person name="Hilbert H."/>
            <person name="Borzym K."/>
            <person name="Langer I."/>
            <person name="Beck A."/>
            <person name="Lehrach H."/>
            <person name="Reinhardt R."/>
            <person name="Pohl T.M."/>
            <person name="Eger P."/>
            <person name="Zimmermann W."/>
            <person name="Wedler H."/>
            <person name="Wambutt R."/>
            <person name="Purnelle B."/>
            <person name="Goffeau A."/>
            <person name="Cadieu E."/>
            <person name="Dreano S."/>
            <person name="Gloux S."/>
            <person name="Lelaure V."/>
            <person name="Mottier S."/>
            <person name="Galibert F."/>
            <person name="Aves S.J."/>
            <person name="Xiang Z."/>
            <person name="Hunt C."/>
            <person name="Moore K."/>
            <person name="Hurst S.M."/>
            <person name="Lucas M."/>
            <person name="Rochet M."/>
            <person name="Gaillardin C."/>
            <person name="Tallada V.A."/>
            <person name="Garzon A."/>
            <person name="Thode G."/>
            <person name="Daga R.R."/>
            <person name="Cruzado L."/>
            <person name="Jimenez J."/>
            <person name="Sanchez M."/>
            <person name="del Rey F."/>
            <person name="Benito J."/>
            <person name="Dominguez A."/>
            <person name="Revuelta J.L."/>
            <person name="Moreno S."/>
            <person name="Armstrong J."/>
            <person name="Forsburg S.L."/>
            <person name="Cerutti L."/>
            <person name="Lowe T."/>
            <person name="McCombie W.R."/>
            <person name="Paulsen I."/>
            <person name="Potashkin J."/>
            <person name="Shpakovski G.V."/>
            <person name="Ussery D."/>
            <person name="Barrell B.G."/>
            <person name="Nurse P."/>
        </authorList>
    </citation>
    <scope>NUCLEOTIDE SEQUENCE [LARGE SCALE GENOMIC DNA]</scope>
    <source>
        <strain>972 / ATCC 24843</strain>
    </source>
</reference>
<reference key="3">
    <citation type="journal article" date="2008" name="J. Proteome Res.">
        <title>Phosphoproteome analysis of fission yeast.</title>
        <authorList>
            <person name="Wilson-Grady J.T."/>
            <person name="Villen J."/>
            <person name="Gygi S.P."/>
        </authorList>
    </citation>
    <scope>PHOSPHORYLATION [LARGE SCALE ANALYSIS] AT SER-223; SER-224 AND SER-227</scope>
    <scope>IDENTIFICATION BY MASS SPECTROMETRY</scope>
</reference>